<sequence>MPKTSYLNKNFESAHYNNVRPSYPLSLVNEIMKFHKGTRKSLVDIGCGTGKATFVVEPYFKEVIGIDPSSAMLSIAEKETNERRLDKKIRFINAPGEDLSSIRPESVDMVISAEAIHWCNLERLFQQVSSILRSDGTFAFWFYIQPEFVDFPEALNVYYKYGWSKDYMGKYLNDNQREILLNYGGEKLRSLLSDRFGDIEVTIYSPSDPNASTVTAENSQFLWRAAITLNQFKEFVKSWSIYTSWARDNPSKPDIADIFINELKEICHCEDLNVPLKIEWSTFYYLCRKRE</sequence>
<reference key="1">
    <citation type="journal article" date="1994" name="Science">
        <title>Complete nucleotide sequence of Saccharomyces cerevisiae chromosome VIII.</title>
        <authorList>
            <person name="Johnston M."/>
            <person name="Andrews S."/>
            <person name="Brinkman R."/>
            <person name="Cooper J."/>
            <person name="Ding H."/>
            <person name="Dover J."/>
            <person name="Du Z."/>
            <person name="Favello A."/>
            <person name="Fulton L."/>
            <person name="Gattung S."/>
            <person name="Geisel C."/>
            <person name="Kirsten J."/>
            <person name="Kucaba T."/>
            <person name="Hillier L.W."/>
            <person name="Jier M."/>
            <person name="Johnston L."/>
            <person name="Langston Y."/>
            <person name="Latreille P."/>
            <person name="Louis E.J."/>
            <person name="Macri C."/>
            <person name="Mardis E."/>
            <person name="Menezes S."/>
            <person name="Mouser L."/>
            <person name="Nhan M."/>
            <person name="Rifkin L."/>
            <person name="Riles L."/>
            <person name="St Peter H."/>
            <person name="Trevaskis E."/>
            <person name="Vaughan K."/>
            <person name="Vignati D."/>
            <person name="Wilcox L."/>
            <person name="Wohldman P."/>
            <person name="Waterston R."/>
            <person name="Wilson R."/>
            <person name="Vaudin M."/>
        </authorList>
    </citation>
    <scope>NUCLEOTIDE SEQUENCE [LARGE SCALE GENOMIC DNA]</scope>
    <source>
        <strain>ATCC 204508 / S288c</strain>
    </source>
</reference>
<reference key="2">
    <citation type="journal article" date="2014" name="G3 (Bethesda)">
        <title>The reference genome sequence of Saccharomyces cerevisiae: Then and now.</title>
        <authorList>
            <person name="Engel S.R."/>
            <person name="Dietrich F.S."/>
            <person name="Fisk D.G."/>
            <person name="Binkley G."/>
            <person name="Balakrishnan R."/>
            <person name="Costanzo M.C."/>
            <person name="Dwight S.S."/>
            <person name="Hitz B.C."/>
            <person name="Karra K."/>
            <person name="Nash R.S."/>
            <person name="Weng S."/>
            <person name="Wong E.D."/>
            <person name="Lloyd P."/>
            <person name="Skrzypek M.S."/>
            <person name="Miyasato S.R."/>
            <person name="Simison M."/>
            <person name="Cherry J.M."/>
        </authorList>
    </citation>
    <scope>GENOME REANNOTATION</scope>
    <source>
        <strain>ATCC 204508 / S288c</strain>
    </source>
</reference>
<reference key="3">
    <citation type="journal article" date="2007" name="Genome Res.">
        <title>Approaching a complete repository of sequence-verified protein-encoding clones for Saccharomyces cerevisiae.</title>
        <authorList>
            <person name="Hu Y."/>
            <person name="Rolfs A."/>
            <person name="Bhullar B."/>
            <person name="Murthy T.V.S."/>
            <person name="Zhu C."/>
            <person name="Berger M.F."/>
            <person name="Camargo A.A."/>
            <person name="Kelley F."/>
            <person name="McCarron S."/>
            <person name="Jepson D."/>
            <person name="Richardson A."/>
            <person name="Raphael J."/>
            <person name="Moreira D."/>
            <person name="Taycher E."/>
            <person name="Zuo D."/>
            <person name="Mohr S."/>
            <person name="Kane M.F."/>
            <person name="Williamson J."/>
            <person name="Simpson A.J.G."/>
            <person name="Bulyk M.L."/>
            <person name="Harlow E."/>
            <person name="Marsischky G."/>
            <person name="Kolodner R.D."/>
            <person name="LaBaer J."/>
        </authorList>
    </citation>
    <scope>NUCLEOTIDE SEQUENCE [GENOMIC DNA]</scope>
    <source>
        <strain>ATCC 204508 / S288c</strain>
    </source>
</reference>
<reference key="4">
    <citation type="journal article" date="1999" name="J. Biol. Chem.">
        <title>S-adenosylmethionine-dependent methylation in Saccharomyces cerevisiae. Identification of a novel protein arginine methyltransferase.</title>
        <authorList>
            <person name="Niewmierzycka A."/>
            <person name="Clarke S."/>
        </authorList>
    </citation>
    <scope>FUNCTION</scope>
</reference>
<reference key="5">
    <citation type="journal article" date="2003" name="Nature">
        <title>Global analysis of protein localization in budding yeast.</title>
        <authorList>
            <person name="Huh W.-K."/>
            <person name="Falvo J.V."/>
            <person name="Gerke L.C."/>
            <person name="Carroll A.S."/>
            <person name="Howson R.W."/>
            <person name="Weissman J.S."/>
            <person name="O'Shea E.K."/>
        </authorList>
    </citation>
    <scope>SUBCELLULAR LOCATION [LARGE SCALE ANALYSIS]</scope>
</reference>
<reference key="6">
    <citation type="journal article" date="2003" name="Nature">
        <title>Global analysis of protein expression in yeast.</title>
        <authorList>
            <person name="Ghaemmaghami S."/>
            <person name="Huh W.-K."/>
            <person name="Bower K."/>
            <person name="Howson R.W."/>
            <person name="Belle A."/>
            <person name="Dephoure N."/>
            <person name="O'Shea E.K."/>
            <person name="Weissman J.S."/>
        </authorList>
    </citation>
    <scope>LEVEL OF PROTEIN EXPRESSION [LARGE SCALE ANALYSIS]</scope>
</reference>
<reference key="7">
    <citation type="journal article" date="2004" name="Yeast">
        <title>Characterization of the transcriptional response to cell wall stress in Saccharomyces cerevisiae.</title>
        <authorList>
            <person name="Boorsma A."/>
            <person name="de Nobel H."/>
            <person name="ter Riet B."/>
            <person name="Bargmann B."/>
            <person name="Brul S."/>
            <person name="Hellingwerf K.J."/>
            <person name="Klis F.M."/>
        </authorList>
    </citation>
    <scope>INDUCTION</scope>
</reference>
<reference key="8">
    <citation type="journal article" date="2008" name="Nat. Chem. Biol.">
        <title>An integrated platform of genomic assays reveals small-molecule bioactivities.</title>
        <authorList>
            <person name="Hoon S."/>
            <person name="Smith A.M."/>
            <person name="Wallace I.M."/>
            <person name="Suresh S."/>
            <person name="Miranda M."/>
            <person name="Fung E."/>
            <person name="Proctor M."/>
            <person name="Shokat K.M."/>
            <person name="Zhang C."/>
            <person name="Davis R.W."/>
            <person name="Giaever G."/>
            <person name="St Onge R.P."/>
            <person name="Nislow C."/>
        </authorList>
    </citation>
    <scope>FUNCTION</scope>
</reference>
<keyword id="KW-0963">Cytoplasm</keyword>
<keyword id="KW-0489">Methyltransferase</keyword>
<keyword id="KW-1185">Reference proteome</keyword>
<keyword id="KW-0949">S-adenosyl-L-methionine</keyword>
<keyword id="KW-0808">Transferase</keyword>
<comment type="function">
    <text evidence="4 5">Probable S-adenosylmethionine-dependent methyltransferase which mediates cantharidin resistance.</text>
</comment>
<comment type="subcellular location">
    <subcellularLocation>
        <location evidence="1">Cytoplasm</location>
    </subcellularLocation>
</comment>
<comment type="induction">
    <text evidence="3">By cell wall perturbation.</text>
</comment>
<comment type="miscellaneous">
    <text evidence="2">Present with 4380 molecules/cell in log phase SD medium.</text>
</comment>
<comment type="similarity">
    <text evidence="6">Belongs to the methyltransferase superfamily.</text>
</comment>
<proteinExistence type="evidence at protein level"/>
<evidence type="ECO:0000269" key="1">
    <source>
    </source>
</evidence>
<evidence type="ECO:0000269" key="2">
    <source>
    </source>
</evidence>
<evidence type="ECO:0000269" key="3">
    <source>
    </source>
</evidence>
<evidence type="ECO:0000269" key="4">
    <source>
    </source>
</evidence>
<evidence type="ECO:0000269" key="5">
    <source>
    </source>
</evidence>
<evidence type="ECO:0000305" key="6"/>
<dbReference type="EC" id="2.1.1.-"/>
<dbReference type="EMBL" id="U00029">
    <property type="protein sequence ID" value="AAB69732.1"/>
    <property type="molecule type" value="Genomic_DNA"/>
</dbReference>
<dbReference type="EMBL" id="AY557767">
    <property type="protein sequence ID" value="AAS56093.1"/>
    <property type="molecule type" value="Genomic_DNA"/>
</dbReference>
<dbReference type="EMBL" id="BK006934">
    <property type="protein sequence ID" value="DAA06902.1"/>
    <property type="molecule type" value="Genomic_DNA"/>
</dbReference>
<dbReference type="PIR" id="S48990">
    <property type="entry name" value="S48990"/>
</dbReference>
<dbReference type="RefSeq" id="NP_012079.1">
    <property type="nucleotide sequence ID" value="NM_001179340.1"/>
</dbReference>
<dbReference type="SMR" id="P38892"/>
<dbReference type="BioGRID" id="36643">
    <property type="interactions" value="95"/>
</dbReference>
<dbReference type="DIP" id="DIP-828N"/>
<dbReference type="FunCoup" id="P38892">
    <property type="interactions" value="967"/>
</dbReference>
<dbReference type="IntAct" id="P38892">
    <property type="interactions" value="1"/>
</dbReference>
<dbReference type="MINT" id="P38892"/>
<dbReference type="STRING" id="4932.YHR209W"/>
<dbReference type="iPTMnet" id="P38892"/>
<dbReference type="PaxDb" id="4932-YHR209W"/>
<dbReference type="PeptideAtlas" id="P38892"/>
<dbReference type="EnsemblFungi" id="YHR209W_mRNA">
    <property type="protein sequence ID" value="YHR209W"/>
    <property type="gene ID" value="YHR209W"/>
</dbReference>
<dbReference type="GeneID" id="856616"/>
<dbReference type="KEGG" id="sce:YHR209W"/>
<dbReference type="AGR" id="SGD:S000001252"/>
<dbReference type="SGD" id="S000001252">
    <property type="gene designation" value="CRG1"/>
</dbReference>
<dbReference type="VEuPathDB" id="FungiDB:YHR209W"/>
<dbReference type="eggNOG" id="KOG3010">
    <property type="taxonomic scope" value="Eukaryota"/>
</dbReference>
<dbReference type="GeneTree" id="ENSGT00940000176672"/>
<dbReference type="HOGENOM" id="CLU_049344_1_2_1"/>
<dbReference type="InParanoid" id="P38892"/>
<dbReference type="OMA" id="WTCASLY"/>
<dbReference type="OrthoDB" id="10027013at2759"/>
<dbReference type="BioCyc" id="YEAST:G3O-31234-MONOMER"/>
<dbReference type="BioGRID-ORCS" id="856616">
    <property type="hits" value="1 hit in 10 CRISPR screens"/>
</dbReference>
<dbReference type="PRO" id="PR:P38892"/>
<dbReference type="Proteomes" id="UP000002311">
    <property type="component" value="Chromosome VIII"/>
</dbReference>
<dbReference type="RNAct" id="P38892">
    <property type="molecule type" value="protein"/>
</dbReference>
<dbReference type="GO" id="GO:0005737">
    <property type="term" value="C:cytoplasm"/>
    <property type="evidence" value="ECO:0007669"/>
    <property type="project" value="UniProtKB-SubCell"/>
</dbReference>
<dbReference type="GO" id="GO:0008168">
    <property type="term" value="F:methyltransferase activity"/>
    <property type="evidence" value="ECO:0000315"/>
    <property type="project" value="SGD"/>
</dbReference>
<dbReference type="GO" id="GO:0003729">
    <property type="term" value="F:mRNA binding"/>
    <property type="evidence" value="ECO:0000314"/>
    <property type="project" value="SGD"/>
</dbReference>
<dbReference type="GO" id="GO:0008757">
    <property type="term" value="F:S-adenosylmethionine-dependent methyltransferase activity"/>
    <property type="evidence" value="ECO:0000314"/>
    <property type="project" value="SGD"/>
</dbReference>
<dbReference type="GO" id="GO:0055088">
    <property type="term" value="P:lipid homeostasis"/>
    <property type="evidence" value="ECO:0000315"/>
    <property type="project" value="SGD"/>
</dbReference>
<dbReference type="GO" id="GO:0032259">
    <property type="term" value="P:methylation"/>
    <property type="evidence" value="ECO:0007669"/>
    <property type="project" value="UniProtKB-KW"/>
</dbReference>
<dbReference type="CDD" id="cd02440">
    <property type="entry name" value="AdoMet_MTases"/>
    <property type="match status" value="1"/>
</dbReference>
<dbReference type="FunFam" id="3.40.50.150:FF:000482">
    <property type="entry name" value="Probable S-adenosylmethionine-dependent methyltransferase CRG1"/>
    <property type="match status" value="1"/>
</dbReference>
<dbReference type="Gene3D" id="3.40.50.150">
    <property type="entry name" value="Vaccinia Virus protein VP39"/>
    <property type="match status" value="1"/>
</dbReference>
<dbReference type="InterPro" id="IPR051052">
    <property type="entry name" value="Diverse_substrate_MTase"/>
</dbReference>
<dbReference type="InterPro" id="IPR013216">
    <property type="entry name" value="Methyltransf_11"/>
</dbReference>
<dbReference type="InterPro" id="IPR029063">
    <property type="entry name" value="SAM-dependent_MTases_sf"/>
</dbReference>
<dbReference type="PANTHER" id="PTHR44942">
    <property type="entry name" value="METHYLTRANSF_11 DOMAIN-CONTAINING PROTEIN"/>
    <property type="match status" value="1"/>
</dbReference>
<dbReference type="PANTHER" id="PTHR44942:SF4">
    <property type="entry name" value="METHYLTRANSFERASE TYPE 11 DOMAIN-CONTAINING PROTEIN"/>
    <property type="match status" value="1"/>
</dbReference>
<dbReference type="Pfam" id="PF08241">
    <property type="entry name" value="Methyltransf_11"/>
    <property type="match status" value="1"/>
</dbReference>
<dbReference type="SUPFAM" id="SSF53335">
    <property type="entry name" value="S-adenosyl-L-methionine-dependent methyltransferases"/>
    <property type="match status" value="1"/>
</dbReference>
<accession>P38892</accession>
<accession>D3DLF8</accession>
<accession>Q6Q5R3</accession>
<protein>
    <recommendedName>
        <fullName>Probable S-adenosylmethionine-dependent methyltransferase CRG1</fullName>
        <ecNumber>2.1.1.-</ecNumber>
    </recommendedName>
    <alternativeName>
        <fullName>Cantharidin resistance protein 1</fullName>
    </alternativeName>
</protein>
<gene>
    <name type="primary">CRG1</name>
    <name type="ordered locus">YHR209W</name>
</gene>
<organism>
    <name type="scientific">Saccharomyces cerevisiae (strain ATCC 204508 / S288c)</name>
    <name type="common">Baker's yeast</name>
    <dbReference type="NCBI Taxonomy" id="559292"/>
    <lineage>
        <taxon>Eukaryota</taxon>
        <taxon>Fungi</taxon>
        <taxon>Dikarya</taxon>
        <taxon>Ascomycota</taxon>
        <taxon>Saccharomycotina</taxon>
        <taxon>Saccharomycetes</taxon>
        <taxon>Saccharomycetales</taxon>
        <taxon>Saccharomycetaceae</taxon>
        <taxon>Saccharomyces</taxon>
    </lineage>
</organism>
<feature type="chain" id="PRO_0000202943" description="Probable S-adenosylmethionine-dependent methyltransferase CRG1">
    <location>
        <begin position="1"/>
        <end position="291"/>
    </location>
</feature>
<feature type="sequence conflict" description="In Ref. 3; AAS56093." evidence="6" ref="3">
    <original>Y</original>
    <variation>C</variation>
    <location>
        <position position="23"/>
    </location>
</feature>
<name>CRG1_YEAST</name>